<organism>
    <name type="scientific">Parvibaculum lavamentivorans (strain DS-1 / DSM 13023 / NCIMB 13966)</name>
    <dbReference type="NCBI Taxonomy" id="402881"/>
    <lineage>
        <taxon>Bacteria</taxon>
        <taxon>Pseudomonadati</taxon>
        <taxon>Pseudomonadota</taxon>
        <taxon>Alphaproteobacteria</taxon>
        <taxon>Hyphomicrobiales</taxon>
        <taxon>Parvibaculaceae</taxon>
        <taxon>Parvibaculum</taxon>
    </lineage>
</organism>
<protein>
    <recommendedName>
        <fullName evidence="1">Phosphoribosylformylglycinamidine cyclo-ligase</fullName>
        <ecNumber evidence="1">6.3.3.1</ecNumber>
    </recommendedName>
    <alternativeName>
        <fullName evidence="1">AIR synthase</fullName>
    </alternativeName>
    <alternativeName>
        <fullName evidence="1">AIRS</fullName>
    </alternativeName>
    <alternativeName>
        <fullName evidence="1">Phosphoribosyl-aminoimidazole synthetase</fullName>
    </alternativeName>
</protein>
<evidence type="ECO:0000255" key="1">
    <source>
        <dbReference type="HAMAP-Rule" id="MF_00741"/>
    </source>
</evidence>
<comment type="catalytic activity">
    <reaction evidence="1">
        <text>2-formamido-N(1)-(5-O-phospho-beta-D-ribosyl)acetamidine + ATP = 5-amino-1-(5-phospho-beta-D-ribosyl)imidazole + ADP + phosphate + H(+)</text>
        <dbReference type="Rhea" id="RHEA:23032"/>
        <dbReference type="ChEBI" id="CHEBI:15378"/>
        <dbReference type="ChEBI" id="CHEBI:30616"/>
        <dbReference type="ChEBI" id="CHEBI:43474"/>
        <dbReference type="ChEBI" id="CHEBI:137981"/>
        <dbReference type="ChEBI" id="CHEBI:147287"/>
        <dbReference type="ChEBI" id="CHEBI:456216"/>
        <dbReference type="EC" id="6.3.3.1"/>
    </reaction>
</comment>
<comment type="pathway">
    <text evidence="1">Purine metabolism; IMP biosynthesis via de novo pathway; 5-amino-1-(5-phospho-D-ribosyl)imidazole from N(2)-formyl-N(1)-(5-phospho-D-ribosyl)glycinamide: step 2/2.</text>
</comment>
<comment type="subcellular location">
    <subcellularLocation>
        <location evidence="1">Cytoplasm</location>
    </subcellularLocation>
</comment>
<comment type="similarity">
    <text evidence="1">Belongs to the AIR synthase family.</text>
</comment>
<sequence>MAPTPPKDRPNRYTYAQAGVDIDAGNELVRMIGPLAASTKRPGSDAALGGFGGLFDLAACGFKDPVLVAANDGVGTKLKVAIEADRHDTVGIDLVAMSVNDLVVQGAEPLFFLDYYATGKLHVDVARDVVAGIAEGCRQAGCALIGGETAEMPGMYAKGDYDLAGFAVGAVERDGVLPRGDVAPGDVLLGLASSGFHSNGFSLVRRIVEDNRISYSAPFPGGDGASIGEVLLAPTRIYVKAMLKTIRETAAVKAVAHITGGGFVENIPRVLPEGINVEIDGASWTMPPVFRWLMELGGIDDTEMGRTFNCGIGMVVVVREDQALEVSDALAEAGETVFRIGRLIETVPGAARVAVKGALGSGK</sequence>
<reference key="1">
    <citation type="journal article" date="2011" name="Stand. Genomic Sci.">
        <title>Complete genome sequence of Parvibaculum lavamentivorans type strain (DS-1(T)).</title>
        <authorList>
            <person name="Schleheck D."/>
            <person name="Weiss M."/>
            <person name="Pitluck S."/>
            <person name="Bruce D."/>
            <person name="Land M.L."/>
            <person name="Han S."/>
            <person name="Saunders E."/>
            <person name="Tapia R."/>
            <person name="Detter C."/>
            <person name="Brettin T."/>
            <person name="Han J."/>
            <person name="Woyke T."/>
            <person name="Goodwin L."/>
            <person name="Pennacchio L."/>
            <person name="Nolan M."/>
            <person name="Cook A.M."/>
            <person name="Kjelleberg S."/>
            <person name="Thomas T."/>
        </authorList>
    </citation>
    <scope>NUCLEOTIDE SEQUENCE [LARGE SCALE GENOMIC DNA]</scope>
    <source>
        <strain>DS-1 / DSM 13023 / NCIMB 13966</strain>
    </source>
</reference>
<feature type="chain" id="PRO_1000148290" description="Phosphoribosylformylglycinamidine cyclo-ligase">
    <location>
        <begin position="1"/>
        <end position="363"/>
    </location>
</feature>
<name>PUR5_PARL1</name>
<accession>A7HYF2</accession>
<proteinExistence type="inferred from homology"/>
<dbReference type="EC" id="6.3.3.1" evidence="1"/>
<dbReference type="EMBL" id="CP000774">
    <property type="protein sequence ID" value="ABS64935.1"/>
    <property type="molecule type" value="Genomic_DNA"/>
</dbReference>
<dbReference type="RefSeq" id="WP_012112266.1">
    <property type="nucleotide sequence ID" value="NC_009719.1"/>
</dbReference>
<dbReference type="SMR" id="A7HYF2"/>
<dbReference type="STRING" id="402881.Plav_3331"/>
<dbReference type="KEGG" id="pla:Plav_3331"/>
<dbReference type="eggNOG" id="COG0150">
    <property type="taxonomic scope" value="Bacteria"/>
</dbReference>
<dbReference type="HOGENOM" id="CLU_047116_0_0_5"/>
<dbReference type="OrthoDB" id="9777881at2"/>
<dbReference type="UniPathway" id="UPA00074">
    <property type="reaction ID" value="UER00129"/>
</dbReference>
<dbReference type="Proteomes" id="UP000006377">
    <property type="component" value="Chromosome"/>
</dbReference>
<dbReference type="GO" id="GO:0005829">
    <property type="term" value="C:cytosol"/>
    <property type="evidence" value="ECO:0007669"/>
    <property type="project" value="TreeGrafter"/>
</dbReference>
<dbReference type="GO" id="GO:0005524">
    <property type="term" value="F:ATP binding"/>
    <property type="evidence" value="ECO:0007669"/>
    <property type="project" value="UniProtKB-KW"/>
</dbReference>
<dbReference type="GO" id="GO:0004637">
    <property type="term" value="F:phosphoribosylamine-glycine ligase activity"/>
    <property type="evidence" value="ECO:0007669"/>
    <property type="project" value="TreeGrafter"/>
</dbReference>
<dbReference type="GO" id="GO:0004641">
    <property type="term" value="F:phosphoribosylformylglycinamidine cyclo-ligase activity"/>
    <property type="evidence" value="ECO:0007669"/>
    <property type="project" value="UniProtKB-UniRule"/>
</dbReference>
<dbReference type="GO" id="GO:0006189">
    <property type="term" value="P:'de novo' IMP biosynthetic process"/>
    <property type="evidence" value="ECO:0007669"/>
    <property type="project" value="UniProtKB-UniRule"/>
</dbReference>
<dbReference type="GO" id="GO:0046084">
    <property type="term" value="P:adenine biosynthetic process"/>
    <property type="evidence" value="ECO:0007669"/>
    <property type="project" value="TreeGrafter"/>
</dbReference>
<dbReference type="CDD" id="cd02196">
    <property type="entry name" value="PurM"/>
    <property type="match status" value="1"/>
</dbReference>
<dbReference type="FunFam" id="3.30.1330.10:FF:000001">
    <property type="entry name" value="Phosphoribosylformylglycinamidine cyclo-ligase"/>
    <property type="match status" value="1"/>
</dbReference>
<dbReference type="FunFam" id="3.90.650.10:FF:000007">
    <property type="entry name" value="Trifunctional purine biosynthetic protein adenosine-3"/>
    <property type="match status" value="1"/>
</dbReference>
<dbReference type="Gene3D" id="3.90.650.10">
    <property type="entry name" value="PurM-like C-terminal domain"/>
    <property type="match status" value="1"/>
</dbReference>
<dbReference type="Gene3D" id="3.30.1330.10">
    <property type="entry name" value="PurM-like, N-terminal domain"/>
    <property type="match status" value="1"/>
</dbReference>
<dbReference type="HAMAP" id="MF_00741">
    <property type="entry name" value="AIRS"/>
    <property type="match status" value="1"/>
</dbReference>
<dbReference type="InterPro" id="IPR010918">
    <property type="entry name" value="PurM-like_C_dom"/>
</dbReference>
<dbReference type="InterPro" id="IPR036676">
    <property type="entry name" value="PurM-like_C_sf"/>
</dbReference>
<dbReference type="InterPro" id="IPR016188">
    <property type="entry name" value="PurM-like_N"/>
</dbReference>
<dbReference type="InterPro" id="IPR036921">
    <property type="entry name" value="PurM-like_N_sf"/>
</dbReference>
<dbReference type="InterPro" id="IPR004733">
    <property type="entry name" value="PurM_cligase"/>
</dbReference>
<dbReference type="NCBIfam" id="TIGR00878">
    <property type="entry name" value="purM"/>
    <property type="match status" value="1"/>
</dbReference>
<dbReference type="PANTHER" id="PTHR10520:SF12">
    <property type="entry name" value="TRIFUNCTIONAL PURINE BIOSYNTHETIC PROTEIN ADENOSINE-3"/>
    <property type="match status" value="1"/>
</dbReference>
<dbReference type="PANTHER" id="PTHR10520">
    <property type="entry name" value="TRIFUNCTIONAL PURINE BIOSYNTHETIC PROTEIN ADENOSINE-3-RELATED"/>
    <property type="match status" value="1"/>
</dbReference>
<dbReference type="Pfam" id="PF00586">
    <property type="entry name" value="AIRS"/>
    <property type="match status" value="1"/>
</dbReference>
<dbReference type="Pfam" id="PF02769">
    <property type="entry name" value="AIRS_C"/>
    <property type="match status" value="1"/>
</dbReference>
<dbReference type="SUPFAM" id="SSF56042">
    <property type="entry name" value="PurM C-terminal domain-like"/>
    <property type="match status" value="1"/>
</dbReference>
<dbReference type="SUPFAM" id="SSF55326">
    <property type="entry name" value="PurM N-terminal domain-like"/>
    <property type="match status" value="1"/>
</dbReference>
<gene>
    <name evidence="1" type="primary">purM</name>
    <name type="ordered locus">Plav_3331</name>
</gene>
<keyword id="KW-0067">ATP-binding</keyword>
<keyword id="KW-0963">Cytoplasm</keyword>
<keyword id="KW-0436">Ligase</keyword>
<keyword id="KW-0547">Nucleotide-binding</keyword>
<keyword id="KW-0658">Purine biosynthesis</keyword>
<keyword id="KW-1185">Reference proteome</keyword>